<accession>Q6HEB2</accession>
<keyword id="KW-0119">Carbohydrate metabolism</keyword>
<keyword id="KW-0378">Hydrolase</keyword>
<feature type="chain" id="PRO_1000066959" description="Glucosamine-6-phosphate deaminase">
    <location>
        <begin position="1"/>
        <end position="262"/>
    </location>
</feature>
<feature type="active site" description="Proton acceptor; for enolization step" evidence="1">
    <location>
        <position position="63"/>
    </location>
</feature>
<feature type="active site" description="For ring-opening step" evidence="1">
    <location>
        <position position="129"/>
    </location>
</feature>
<feature type="active site" description="Proton acceptor; for ring-opening step" evidence="1">
    <location>
        <position position="131"/>
    </location>
</feature>
<feature type="active site" description="For ring-opening step" evidence="1">
    <location>
        <position position="136"/>
    </location>
</feature>
<organism>
    <name type="scientific">Bacillus thuringiensis subsp. konkukian (strain 97-27)</name>
    <dbReference type="NCBI Taxonomy" id="281309"/>
    <lineage>
        <taxon>Bacteria</taxon>
        <taxon>Bacillati</taxon>
        <taxon>Bacillota</taxon>
        <taxon>Bacilli</taxon>
        <taxon>Bacillales</taxon>
        <taxon>Bacillaceae</taxon>
        <taxon>Bacillus</taxon>
        <taxon>Bacillus cereus group</taxon>
    </lineage>
</organism>
<reference key="1">
    <citation type="journal article" date="2006" name="J. Bacteriol.">
        <title>Pathogenomic sequence analysis of Bacillus cereus and Bacillus thuringiensis isolates closely related to Bacillus anthracis.</title>
        <authorList>
            <person name="Han C.S."/>
            <person name="Xie G."/>
            <person name="Challacombe J.F."/>
            <person name="Altherr M.R."/>
            <person name="Bhotika S.S."/>
            <person name="Bruce D."/>
            <person name="Campbell C.S."/>
            <person name="Campbell M.L."/>
            <person name="Chen J."/>
            <person name="Chertkov O."/>
            <person name="Cleland C."/>
            <person name="Dimitrijevic M."/>
            <person name="Doggett N.A."/>
            <person name="Fawcett J.J."/>
            <person name="Glavina T."/>
            <person name="Goodwin L.A."/>
            <person name="Hill K.K."/>
            <person name="Hitchcock P."/>
            <person name="Jackson P.J."/>
            <person name="Keim P."/>
            <person name="Kewalramani A.R."/>
            <person name="Longmire J."/>
            <person name="Lucas S."/>
            <person name="Malfatti S."/>
            <person name="McMurry K."/>
            <person name="Meincke L.J."/>
            <person name="Misra M."/>
            <person name="Moseman B.L."/>
            <person name="Mundt M."/>
            <person name="Munk A.C."/>
            <person name="Okinaka R.T."/>
            <person name="Parson-Quintana B."/>
            <person name="Reilly L.P."/>
            <person name="Richardson P."/>
            <person name="Robinson D.L."/>
            <person name="Rubin E."/>
            <person name="Saunders E."/>
            <person name="Tapia R."/>
            <person name="Tesmer J.G."/>
            <person name="Thayer N."/>
            <person name="Thompson L.S."/>
            <person name="Tice H."/>
            <person name="Ticknor L.O."/>
            <person name="Wills P.L."/>
            <person name="Brettin T.S."/>
            <person name="Gilna P."/>
        </authorList>
    </citation>
    <scope>NUCLEOTIDE SEQUENCE [LARGE SCALE GENOMIC DNA]</scope>
    <source>
        <strain>97-27</strain>
    </source>
</reference>
<protein>
    <recommendedName>
        <fullName evidence="1">Glucosamine-6-phosphate deaminase</fullName>
        <ecNumber evidence="1">3.5.99.6</ecNumber>
    </recommendedName>
    <alternativeName>
        <fullName evidence="1">GlcN6P deaminase</fullName>
        <shortName evidence="1">GNPDA</shortName>
    </alternativeName>
    <alternativeName>
        <fullName evidence="1">Glucosamine-6-phosphate isomerase</fullName>
    </alternativeName>
</protein>
<sequence length="262" mass="28971">MNILVVKTPEELAEAGYKLIEEVVKTKENPTLGMATGSSPLGIYAEMRKNKLDTSRVTTVNLDEYVNLPHEDKNSYHYFMQEQLFDHLPFKQTYVPNGMASDLEEECKRYEGILAANPVDLQILGIGENGHIGFNEPGTPFNSPTNIVELTESTRQANLRFFEKEEDVPTHAITMGIGSIMKAKQILLVAMGSKKAEAVKELLQGAYSEACPATVLQRHPNVTVIADQEALSLCSEAIADEHRQVFTISDLLSDSRVGETAN</sequence>
<name>NAGB_BACHK</name>
<comment type="function">
    <text evidence="1">Catalyzes the reversible isomerization-deamination of glucosamine 6-phosphate (GlcN6P) to form fructose 6-phosphate (Fru6P) and ammonium ion.</text>
</comment>
<comment type="catalytic activity">
    <reaction evidence="1">
        <text>alpha-D-glucosamine 6-phosphate + H2O = beta-D-fructose 6-phosphate + NH4(+)</text>
        <dbReference type="Rhea" id="RHEA:12172"/>
        <dbReference type="ChEBI" id="CHEBI:15377"/>
        <dbReference type="ChEBI" id="CHEBI:28938"/>
        <dbReference type="ChEBI" id="CHEBI:57634"/>
        <dbReference type="ChEBI" id="CHEBI:75989"/>
        <dbReference type="EC" id="3.5.99.6"/>
    </reaction>
</comment>
<comment type="pathway">
    <text evidence="1">Amino-sugar metabolism; N-acetylneuraminate degradation; D-fructose 6-phosphate from N-acetylneuraminate: step 5/5.</text>
</comment>
<comment type="similarity">
    <text evidence="1">Belongs to the glucosamine/galactosamine-6-phosphate isomerase family. NagB subfamily.</text>
</comment>
<gene>
    <name evidence="1" type="primary">nagB</name>
    <name type="ordered locus">BT9727_3795</name>
</gene>
<evidence type="ECO:0000255" key="1">
    <source>
        <dbReference type="HAMAP-Rule" id="MF_01241"/>
    </source>
</evidence>
<dbReference type="EC" id="3.5.99.6" evidence="1"/>
<dbReference type="EMBL" id="AE017355">
    <property type="protein sequence ID" value="AAT60713.1"/>
    <property type="molecule type" value="Genomic_DNA"/>
</dbReference>
<dbReference type="RefSeq" id="WP_001024206.1">
    <property type="nucleotide sequence ID" value="NC_005957.1"/>
</dbReference>
<dbReference type="RefSeq" id="YP_038114.1">
    <property type="nucleotide sequence ID" value="NC_005957.1"/>
</dbReference>
<dbReference type="SMR" id="Q6HEB2"/>
<dbReference type="GeneID" id="75087199"/>
<dbReference type="KEGG" id="btk:BT9727_3795"/>
<dbReference type="PATRIC" id="fig|281309.8.peg.4045"/>
<dbReference type="HOGENOM" id="CLU_049611_1_0_9"/>
<dbReference type="UniPathway" id="UPA00629">
    <property type="reaction ID" value="UER00684"/>
</dbReference>
<dbReference type="Proteomes" id="UP000001301">
    <property type="component" value="Chromosome"/>
</dbReference>
<dbReference type="GO" id="GO:0005737">
    <property type="term" value="C:cytoplasm"/>
    <property type="evidence" value="ECO:0007669"/>
    <property type="project" value="TreeGrafter"/>
</dbReference>
<dbReference type="GO" id="GO:0004342">
    <property type="term" value="F:glucosamine-6-phosphate deaminase activity"/>
    <property type="evidence" value="ECO:0007669"/>
    <property type="project" value="UniProtKB-UniRule"/>
</dbReference>
<dbReference type="GO" id="GO:0042802">
    <property type="term" value="F:identical protein binding"/>
    <property type="evidence" value="ECO:0007669"/>
    <property type="project" value="TreeGrafter"/>
</dbReference>
<dbReference type="GO" id="GO:0005975">
    <property type="term" value="P:carbohydrate metabolic process"/>
    <property type="evidence" value="ECO:0007669"/>
    <property type="project" value="InterPro"/>
</dbReference>
<dbReference type="GO" id="GO:0006043">
    <property type="term" value="P:glucosamine catabolic process"/>
    <property type="evidence" value="ECO:0007669"/>
    <property type="project" value="TreeGrafter"/>
</dbReference>
<dbReference type="GO" id="GO:0006046">
    <property type="term" value="P:N-acetylglucosamine catabolic process"/>
    <property type="evidence" value="ECO:0007669"/>
    <property type="project" value="TreeGrafter"/>
</dbReference>
<dbReference type="GO" id="GO:0019262">
    <property type="term" value="P:N-acetylneuraminate catabolic process"/>
    <property type="evidence" value="ECO:0007669"/>
    <property type="project" value="UniProtKB-UniRule"/>
</dbReference>
<dbReference type="CDD" id="cd01399">
    <property type="entry name" value="GlcN6P_deaminase"/>
    <property type="match status" value="1"/>
</dbReference>
<dbReference type="FunFam" id="3.40.50.1360:FF:000003">
    <property type="entry name" value="Glucosamine-6-phosphate deaminase"/>
    <property type="match status" value="1"/>
</dbReference>
<dbReference type="Gene3D" id="3.40.50.1360">
    <property type="match status" value="1"/>
</dbReference>
<dbReference type="HAMAP" id="MF_01241">
    <property type="entry name" value="GlcN6P_deamin"/>
    <property type="match status" value="1"/>
</dbReference>
<dbReference type="InterPro" id="IPR006148">
    <property type="entry name" value="Glc/Gal-6P_isomerase"/>
</dbReference>
<dbReference type="InterPro" id="IPR004547">
    <property type="entry name" value="Glucosamine6P_isomerase"/>
</dbReference>
<dbReference type="InterPro" id="IPR018321">
    <property type="entry name" value="Glucosamine6P_isomerase_CS"/>
</dbReference>
<dbReference type="InterPro" id="IPR037171">
    <property type="entry name" value="NagB/RpiA_transferase-like"/>
</dbReference>
<dbReference type="NCBIfam" id="TIGR00502">
    <property type="entry name" value="nagB"/>
    <property type="match status" value="1"/>
</dbReference>
<dbReference type="NCBIfam" id="NF001682">
    <property type="entry name" value="PRK00443.1-1"/>
    <property type="match status" value="1"/>
</dbReference>
<dbReference type="PANTHER" id="PTHR11280">
    <property type="entry name" value="GLUCOSAMINE-6-PHOSPHATE ISOMERASE"/>
    <property type="match status" value="1"/>
</dbReference>
<dbReference type="PANTHER" id="PTHR11280:SF5">
    <property type="entry name" value="GLUCOSAMINE-6-PHOSPHATE ISOMERASE"/>
    <property type="match status" value="1"/>
</dbReference>
<dbReference type="Pfam" id="PF01182">
    <property type="entry name" value="Glucosamine_iso"/>
    <property type="match status" value="1"/>
</dbReference>
<dbReference type="SUPFAM" id="SSF100950">
    <property type="entry name" value="NagB/RpiA/CoA transferase-like"/>
    <property type="match status" value="1"/>
</dbReference>
<dbReference type="PROSITE" id="PS01161">
    <property type="entry name" value="GLC_GALNAC_ISOMERASE"/>
    <property type="match status" value="1"/>
</dbReference>
<proteinExistence type="inferred from homology"/>